<name>TMP_BPT5</name>
<reference key="1">
    <citation type="submission" date="2003-05" db="EMBL/GenBank/DDBJ databases">
        <title>Nucleotide sequence of the D18 gene of bacteriophage T5.</title>
        <authorList>
            <person name="Feucht A.A."/>
            <person name="Demleitner G."/>
            <person name="Heller K.J."/>
        </authorList>
    </citation>
    <scope>NUCLEOTIDE SEQUENCE [GENOMIC DNA]</scope>
    <source>
        <strain>T5st</strain>
    </source>
</reference>
<reference key="2">
    <citation type="submission" date="2004-01" db="EMBL/GenBank/DDBJ databases">
        <title>Bacteriophage T5 complete genome.</title>
        <authorList>
            <person name="Ksenzenko V.N."/>
            <person name="Kaliman A.V."/>
            <person name="Krutilina A.I."/>
            <person name="Shlyapnikov M.G."/>
        </authorList>
    </citation>
    <scope>NUCLEOTIDE SEQUENCE [LARGE SCALE GENOMIC DNA]</scope>
</reference>
<reference key="3">
    <citation type="journal article" date="2005" name="Virology">
        <title>Complete genome sequence of bacteriophage T5.</title>
        <authorList>
            <person name="Wang J."/>
            <person name="Jiang Y."/>
            <person name="Vincent M."/>
            <person name="Sun Y."/>
            <person name="Yu H."/>
            <person name="Wang J."/>
            <person name="Bao Q."/>
            <person name="Kong H."/>
            <person name="Hu S."/>
        </authorList>
    </citation>
    <scope>NUCLEOTIDE SEQUENCE [LARGE SCALE GENOMIC DNA]</scope>
    <scope>INDUCTION</scope>
    <source>
        <strain evidence="12">ATCC 11303-B5</strain>
    </source>
</reference>
<reference key="4">
    <citation type="journal article" date="2014" name="J. Virol.">
        <title>Insights into bacteriophage T5 structure from analysis of its morphogenesis genes and protein components.</title>
        <authorList>
            <person name="Zivanovic Y."/>
            <person name="Confalonieri F."/>
            <person name="Ponchon L."/>
            <person name="Lurz R."/>
            <person name="Chami M."/>
            <person name="Flayhan A."/>
            <person name="Renouard M."/>
            <person name="Huet A."/>
            <person name="Decottignies P."/>
            <person name="Davidson A.R."/>
            <person name="Breyton C."/>
            <person name="Boulanger P."/>
        </authorList>
    </citation>
    <scope>NUCLEOTIDE SEQUENCE [LARGE SCALE GENOMIC DNA]</scope>
    <scope>SUBCELLULAR LOCATION</scope>
    <scope>PROTEOLYTIC CLEAVAGE</scope>
    <source>
        <strain>St0 deletion mutant</strain>
    </source>
</reference>
<reference key="5">
    <citation type="journal article" date="2008" name="J. Biol. Chem.">
        <title>Phage T5 straight tail fiber is a multifunctional protein acting as a tape measure and carrying fusogenic and muralytic activities.</title>
        <authorList>
            <person name="Boulanger P."/>
            <person name="Jacquot P."/>
            <person name="Plancon L."/>
            <person name="Chami M."/>
            <person name="Engel A."/>
            <person name="Parquet C."/>
            <person name="Herbeuval C."/>
            <person name="Letellier L."/>
        </authorList>
    </citation>
    <scope>FUNCTION</scope>
    <scope>SUBCELLULAR LOCATION</scope>
    <scope>CATALYTIC ACTIVITY</scope>
</reference>
<reference key="6">
    <citation type="journal article" date="2013" name="Crit. Rev. Microbiol.">
        <title>Bacteriophage virion-associated peptidoglycan hydrolases: potential new enzybiotics.</title>
        <authorList>
            <person name="Rodriguez-Rubio L."/>
            <person name="Martinez B."/>
            <person name="Donovan D.M."/>
            <person name="Rodriguez A."/>
            <person name="Garcia P."/>
        </authorList>
    </citation>
    <scope>REVIEW</scope>
</reference>
<reference evidence="13 14 15 16" key="7">
    <citation type="journal article" date="2023" name="Sci. Adv.">
        <title>Structural basis of bacteriophage T5 infection trigger and E. coli cell wall perforation.</title>
        <authorList>
            <person name="Linares R."/>
            <person name="Arnaud C.A."/>
            <person name="Effantin G."/>
            <person name="Darnault C."/>
            <person name="Epalle N.H."/>
            <person name="Boeri Erba E."/>
            <person name="Schoehn G."/>
            <person name="Breyton C."/>
        </authorList>
    </citation>
    <scope>STRUCTURE BY ELECTRON MICROSCOPY (3.53 ANGSTROMS)</scope>
    <scope>FUNCTION</scope>
    <scope>SUBCELLULAR LOCATION</scope>
    <scope>SUBUNIT</scope>
</reference>
<protein>
    <recommendedName>
        <fullName evidence="5 7">Tape measure protein pb2 precursor</fullName>
        <shortName evidence="8">TMP-pb2</shortName>
    </recommendedName>
    <alternativeName>
        <fullName evidence="7">Pore-forming protein pb2</fullName>
    </alternativeName>
    <alternativeName>
        <fullName evidence="6">Tail protein pb2</fullName>
    </alternativeName>
    <component>
        <recommendedName>
            <fullName evidence="7">Tape measure protein pb2</fullName>
        </recommendedName>
    </component>
    <component>
        <recommendedName>
            <fullName evidence="8">Exolysin</fullName>
            <ecNumber evidence="8">4.2.2.n1</ecNumber>
        </recommendedName>
    </component>
</protein>
<evidence type="ECO:0000255" key="1"/>
<evidence type="ECO:0000269" key="2">
    <source>
    </source>
</evidence>
<evidence type="ECO:0000269" key="3">
    <source>
    </source>
</evidence>
<evidence type="ECO:0000269" key="4">
    <source>
    </source>
</evidence>
<evidence type="ECO:0000303" key="5">
    <source>
    </source>
</evidence>
<evidence type="ECO:0000303" key="6">
    <source>
    </source>
</evidence>
<evidence type="ECO:0000303" key="7">
    <source>
    </source>
</evidence>
<evidence type="ECO:0000305" key="8"/>
<evidence type="ECO:0000305" key="9">
    <source>
    </source>
</evidence>
<evidence type="ECO:0000312" key="10">
    <source>
        <dbReference type="EMBL" id="AAQ92756.2"/>
    </source>
</evidence>
<evidence type="ECO:0000312" key="11">
    <source>
        <dbReference type="EMBL" id="AAU05275.1"/>
    </source>
</evidence>
<evidence type="ECO:0000312" key="12">
    <source>
        <dbReference type="EMBL" id="AAX12066.1"/>
    </source>
</evidence>
<evidence type="ECO:0007744" key="13">
    <source>
        <dbReference type="PDB" id="7ZHJ"/>
    </source>
</evidence>
<evidence type="ECO:0007744" key="14">
    <source>
        <dbReference type="PDB" id="7ZN2"/>
    </source>
</evidence>
<evidence type="ECO:0007744" key="15">
    <source>
        <dbReference type="PDB" id="7ZQB"/>
    </source>
</evidence>
<evidence type="ECO:0007744" key="16">
    <source>
        <dbReference type="PDB" id="7ZQP"/>
    </source>
</evidence>
<keyword id="KW-0002">3D-structure</keyword>
<keyword id="KW-0929">Antimicrobial</keyword>
<keyword id="KW-0081">Bacteriolytic enzyme</keyword>
<keyword id="KW-0175">Coiled coil</keyword>
<keyword id="KW-1235">Degradation of host cell envelope components during virus entry</keyword>
<keyword id="KW-1236">Degradation of host peptidoglycans during virus entry</keyword>
<keyword id="KW-0426">Late protein</keyword>
<keyword id="KW-0456">Lyase</keyword>
<keyword id="KW-1172">Pore-mediated penetration of viral genome into host cell</keyword>
<keyword id="KW-1185">Reference proteome</keyword>
<keyword id="KW-1171">Viral genome ejection through host cell envelope</keyword>
<keyword id="KW-1243">Viral long flexible tail ejection system</keyword>
<keyword id="KW-1162">Viral penetration into host cytoplasm</keyword>
<keyword id="KW-1188">Viral release from host cell</keyword>
<keyword id="KW-1245">Viral tail assembly</keyword>
<keyword id="KW-0946">Virion</keyword>
<keyword id="KW-1160">Virus entry into host cell</keyword>
<feature type="chain" id="PRO_0000432975" description="Tape measure protein pb2 precursor">
    <location>
        <begin position="1"/>
        <end position="1219"/>
    </location>
</feature>
<feature type="chain" id="PRO_0000458420" description="Tape measure protein pb2">
    <location>
        <begin position="1"/>
        <end position="1127"/>
    </location>
</feature>
<feature type="chain" id="PRO_0000458421" description="Exolysin">
    <location>
        <begin position="1128"/>
        <end position="1219"/>
    </location>
</feature>
<feature type="coiled-coil region" evidence="1">
    <location>
        <begin position="441"/>
        <end position="519"/>
    </location>
</feature>
<feature type="coiled-coil region" evidence="1">
    <location>
        <begin position="838"/>
        <end position="941"/>
    </location>
</feature>
<feature type="coiled-coil region" evidence="1">
    <location>
        <begin position="1003"/>
        <end position="1032"/>
    </location>
</feature>
<feature type="site" description="Cleavage; by the prohead protease" evidence="3 4">
    <location>
        <begin position="1127"/>
        <end position="1128"/>
    </location>
</feature>
<feature type="sequence conflict" description="In Ref. 1; AAP75892." evidence="8" ref="1">
    <original>P</original>
    <variation>S</variation>
    <location>
        <position position="906"/>
    </location>
</feature>
<gene>
    <name evidence="10" type="primary">D18-19</name>
    <name evidence="10" type="ORF">T5.140</name>
    <name evidence="11" type="ORF">T5p136</name>
</gene>
<dbReference type="EC" id="4.2.2.n1" evidence="8"/>
<dbReference type="EMBL" id="AY303686">
    <property type="protein sequence ID" value="AAP75892.1"/>
    <property type="molecule type" value="Genomic_DNA"/>
</dbReference>
<dbReference type="EMBL" id="AY543070">
    <property type="protein sequence ID" value="AAQ92756.2"/>
    <property type="molecule type" value="Genomic_DNA"/>
</dbReference>
<dbReference type="EMBL" id="AY692264">
    <property type="protein sequence ID" value="AAU05275.1"/>
    <property type="molecule type" value="Genomic_DNA"/>
</dbReference>
<dbReference type="EMBL" id="AY587007">
    <property type="protein sequence ID" value="AAX12066.1"/>
    <property type="molecule type" value="Genomic_DNA"/>
</dbReference>
<dbReference type="RefSeq" id="YP_006968.1">
    <property type="nucleotide sequence ID" value="NC_005859.1"/>
</dbReference>
<dbReference type="PDB" id="7ZHJ">
    <property type="method" value="EM"/>
    <property type="resolution" value="3.53 A"/>
    <property type="chains" value="e/f/g=1-1219"/>
</dbReference>
<dbReference type="PDB" id="7ZN2">
    <property type="method" value="EM"/>
    <property type="resolution" value="4.29 A"/>
    <property type="chains" value="h/i/j=1-1219"/>
</dbReference>
<dbReference type="PDB" id="7ZQB">
    <property type="method" value="EM"/>
    <property type="resolution" value="3.88 A"/>
    <property type="chains" value="e/f/g=1-1219"/>
</dbReference>
<dbReference type="PDB" id="7ZQP">
    <property type="method" value="EM"/>
    <property type="resolution" value="3.60 A"/>
    <property type="chains" value="h/i/j=1-1219"/>
</dbReference>
<dbReference type="PDBsum" id="7ZHJ"/>
<dbReference type="PDBsum" id="7ZN2"/>
<dbReference type="PDBsum" id="7ZQB"/>
<dbReference type="PDBsum" id="7ZQP"/>
<dbReference type="EMDB" id="EMD-14733"/>
<dbReference type="EMDB" id="EMD-14799"/>
<dbReference type="EMDB" id="EMD-14869"/>
<dbReference type="EMDB" id="EMD-14873"/>
<dbReference type="SMR" id="Q6QGE7"/>
<dbReference type="TCDB" id="1.A.44.1.1">
    <property type="family name" value="the pore-forming tail tip pb2 protein of phage t5 (t5-pb2) family"/>
</dbReference>
<dbReference type="GeneID" id="2777629"/>
<dbReference type="KEGG" id="vg:2777629"/>
<dbReference type="Proteomes" id="UP000002107">
    <property type="component" value="Genome"/>
</dbReference>
<dbReference type="Proteomes" id="UP000002141">
    <property type="component" value="Segment"/>
</dbReference>
<dbReference type="Proteomes" id="UP000002503">
    <property type="component" value="Segment"/>
</dbReference>
<dbReference type="GO" id="GO:0098015">
    <property type="term" value="C:virus tail"/>
    <property type="evidence" value="ECO:0000314"/>
    <property type="project" value="UniProtKB"/>
</dbReference>
<dbReference type="GO" id="GO:0016829">
    <property type="term" value="F:lyase activity"/>
    <property type="evidence" value="ECO:0007669"/>
    <property type="project" value="UniProtKB-KW"/>
</dbReference>
<dbReference type="GO" id="GO:0061783">
    <property type="term" value="F:peptidoglycan muralytic activity"/>
    <property type="evidence" value="ECO:0000314"/>
    <property type="project" value="CACAO"/>
</dbReference>
<dbReference type="GO" id="GO:0042742">
    <property type="term" value="P:defense response to bacterium"/>
    <property type="evidence" value="ECO:0007669"/>
    <property type="project" value="UniProtKB-KW"/>
</dbReference>
<dbReference type="GO" id="GO:0031640">
    <property type="term" value="P:killing of cells of another organism"/>
    <property type="evidence" value="ECO:0007669"/>
    <property type="project" value="UniProtKB-KW"/>
</dbReference>
<dbReference type="GO" id="GO:0044409">
    <property type="term" value="P:symbiont entry into host"/>
    <property type="evidence" value="ECO:0000314"/>
    <property type="project" value="UniProtKB"/>
</dbReference>
<dbReference type="GO" id="GO:0098994">
    <property type="term" value="P:symbiont entry into host cell via disruption of host cell envelope"/>
    <property type="evidence" value="ECO:0007669"/>
    <property type="project" value="UniProtKB-KW"/>
</dbReference>
<dbReference type="GO" id="GO:0098932">
    <property type="term" value="P:symbiont entry into host cell via disruption of host cell wall peptidoglycan"/>
    <property type="evidence" value="ECO:0007669"/>
    <property type="project" value="UniProtKB-KW"/>
</dbReference>
<dbReference type="GO" id="GO:0099001">
    <property type="term" value="P:symbiont genome ejection through host cell envelope, long flexible tail mechanism"/>
    <property type="evidence" value="ECO:0007669"/>
    <property type="project" value="UniProtKB-KW"/>
</dbReference>
<dbReference type="GO" id="GO:0044694">
    <property type="term" value="P:symbiont genome entry into host cell via pore formation in plasma membrane"/>
    <property type="evidence" value="ECO:0007669"/>
    <property type="project" value="UniProtKB-KW"/>
</dbReference>
<dbReference type="GO" id="GO:0098003">
    <property type="term" value="P:viral tail assembly"/>
    <property type="evidence" value="ECO:0000314"/>
    <property type="project" value="UniProtKB"/>
</dbReference>
<dbReference type="InterPro" id="IPR056208">
    <property type="entry name" value="TMP_PB2_C"/>
</dbReference>
<dbReference type="InterPro" id="IPR056207">
    <property type="entry name" value="TMP_PB2_N"/>
</dbReference>
<dbReference type="Pfam" id="PF24165">
    <property type="entry name" value="TMP_C"/>
    <property type="match status" value="1"/>
</dbReference>
<dbReference type="Pfam" id="PF24164">
    <property type="entry name" value="TMP_N"/>
    <property type="match status" value="1"/>
</dbReference>
<accession>Q6QGE7</accession>
<accession>Q7Y5E2</accession>
<sequence length="1219" mass="131496">MTDKLIRELLIDVKQKGATRTAKSIENVSDALENAAAASELTNEQLGKMPRTLYSIERAADRAAKSLTKMQASRGMAGITKSIDGIGDKLDYLAIQLIEVTDKLEIGFDGVSRSVKAMGNDVAAATEKVQDRLYDTNRALGGTSKGFNDTAGAAGRASRALGNTSGSARGATRDFAAMAKIGGRLPIMYAALASNVFVLQTAFESLKVGDQLNRLEQFGTIVGTMTGTPVQTLALSLQNATNGAISFEEAMRQASSASAYGFDSEQLEQFGLVARRAAAVLGVDMTDALNRVIKGVSKQEIELLDELGVTIRLNDAYENYVKQLNATSTGIKYTVDSLTTYQKQQAYANEVIAESTRRFGYLDDALKATSWEQFAANANSALRSLQQSAATYLNPVMDTLNTFLYQTKSSQMRVSAMARSASAKTTPAENVTALIENAVGAREDLDTYLKESEERVKKAQELKQQLDDLKAKQAATAPIANALTAGGIGGDESNKLVVQLTNELARQNKEIEERTKTEKVLRQAVQDTGEALLRNGKLAEQLGAKMKYADTAVPGDKGVFEVDPNNLKAVSEIQKNFDFLKKSSSDTANNIRMAASSITNAKKASSDLNSVVKAVEDTSKVTGQSADTLVKNLNLGFSSLDQMKAAQKGLSEYVTAMDKSEQNALEVAKRKDEVYNQTKDKAKAEAAAREVLLRQQQEQLTAAKALLAINPNDPEALKQVAKIETEILNTKAQGFENAKKTKDYTDKILGVDREIALLNDRTMTSTQYRLAQLRLELQLEQEKTELYSKQADGQAKVEQSRRAQAQISREIWEAEKQGTASHVSALMDALEVSQTQRNVTGQSQILTERLSILQQQLELSKGNTEEELKYRNEIYKTSAALEQLKKQRESQMQQQVGSSVGATYTPTTGLIGEDKDFADMQNRMASYDQAISKLSELNSEATAVAQSMGNLTNAMIQFSQGSLDTTSMIASGMQTVASMIQYSTSQQVSAIDQAIAAEQKRDGKSEASKAKLKKLEAEKLKIQQDAAKKQIIIQTAVAVMQAATAVPYPFSIPLMVAAGLAGALALAQASSASGMSSIADSGADTTQYLTLGERQKNVDVSMQASSGELSYLRGDKGIGNANSFVPRAEGGMMYPGVSYQMGEHGTEVVTPMVPMKATPNDQLSDGSKTTSGRPIILNISTMDAASFRDFASNNSTAFRDAVELALNENGTTLKSLGNS</sequence>
<organismHost>
    <name type="scientific">Escherichia coli</name>
    <dbReference type="NCBI Taxonomy" id="562"/>
</organismHost>
<organism>
    <name type="scientific">Escherichia phage T5</name>
    <name type="common">Enterobacteria phage T5</name>
    <dbReference type="NCBI Taxonomy" id="2695836"/>
    <lineage>
        <taxon>Viruses</taxon>
        <taxon>Duplodnaviria</taxon>
        <taxon>Heunggongvirae</taxon>
        <taxon>Uroviricota</taxon>
        <taxon>Caudoviricetes</taxon>
        <taxon>Demerecviridae</taxon>
        <taxon>Markadamsvirinae</taxon>
        <taxon>Tequintavirus</taxon>
        <taxon>Tequintavirus T5</taxon>
    </lineage>
</organism>
<comment type="function">
    <molecule>Tape measure protein pb2</molecule>
    <text evidence="2 4">Functions as a tape measure protein that serves as a base for tail tube protein polymerization and acts as a template for tail length determination (PubMed:18348984, PubMed:36961893). Fills the tail tube with its long coiled-coil domain and is expelled during the conformation changes that follow T5 binding to host FhuA (PubMed:18348984, PubMed:36961893). Forms a channel through the outer-membrane after binding of the receptor binding protein pb5 with the host receptor FhuA (PubMed:36961893).</text>
</comment>
<comment type="function">
    <molecule>Exolysin</molecule>
    <text evidence="9">Displays an exolysin activity that is probably involved in the fusion with the host membrane and in the host peptidoglycan digestion necessary for viral DNA entry into the host cell.</text>
</comment>
<comment type="catalytic activity">
    <molecule>Exolysin</molecule>
    <reaction evidence="9">
        <text>Exolytic cleavage of the (1-&gt;4)-beta-glycosidic linkage between N-acetylmuramic acid (MurNAc) and N-acetylglucosamine (GlcNAc) residues in peptidoglycan, from either the reducing or the non-reducing ends of the peptidoglycan chains, with concomitant formation of a 1,6-anhydrobond in the MurNAc residue.</text>
        <dbReference type="EC" id="4.2.2.n1"/>
    </reaction>
</comment>
<comment type="subunit">
    <text evidence="4">Homotrimer.</text>
</comment>
<comment type="subcellular location">
    <molecule>Tape measure protein pb2</molecule>
    <subcellularLocation>
        <location evidence="2 3 4">Virion</location>
    </subcellularLocation>
    <text evidence="2 3 4">Component of the tail (PubMed:18348984, PubMed:24198424, PubMed:36961893). Located in the lumen of the tail tube (PubMed:36961893). The C-terminus is located in the lumen of the baseplate, interacting with the base of the pb3 closed ring (PubMed:36961893).</text>
</comment>
<comment type="subcellular location">
    <molecule>Exolysin</molecule>
    <subcellularLocation>
        <location evidence="4">Virion</location>
    </subcellularLocation>
    <text evidence="4">Component of the tail (PubMed:36961893). Located in the lumen of the tail tube (PubMed:36961893). The C-terminus is located in the lumen of the baseplate, interacting with the base of the pb3 closed ring (PubMed:36961893).</text>
</comment>
<comment type="domain">
    <text evidence="7">Probably forms a coiled-coil structure.</text>
</comment>
<proteinExistence type="evidence at protein level"/>